<proteinExistence type="evidence at protein level"/>
<sequence length="38" mass="4803">DSHEERHHGRHGHHKYGRKFHEKHHSHRGYRSNYLYDN</sequence>
<gene>
    <name type="primary">HTN1</name>
</gene>
<protein>
    <recommendedName>
        <fullName>Histatin-1</fullName>
    </recommendedName>
</protein>
<evidence type="ECO:0000250" key="1">
    <source>
        <dbReference type="UniProtKB" id="P15515"/>
    </source>
</evidence>
<evidence type="ECO:0000256" key="2">
    <source>
        <dbReference type="SAM" id="MobiDB-lite"/>
    </source>
</evidence>
<evidence type="ECO:0000269" key="3">
    <source>
    </source>
</evidence>
<evidence type="ECO:0000305" key="4"/>
<organism>
    <name type="scientific">Macaca fascicularis</name>
    <name type="common">Crab-eating macaque</name>
    <name type="synonym">Cynomolgus monkey</name>
    <dbReference type="NCBI Taxonomy" id="9541"/>
    <lineage>
        <taxon>Eukaryota</taxon>
        <taxon>Metazoa</taxon>
        <taxon>Chordata</taxon>
        <taxon>Craniata</taxon>
        <taxon>Vertebrata</taxon>
        <taxon>Euteleostomi</taxon>
        <taxon>Mammalia</taxon>
        <taxon>Eutheria</taxon>
        <taxon>Euarchontoglires</taxon>
        <taxon>Primates</taxon>
        <taxon>Haplorrhini</taxon>
        <taxon>Catarrhini</taxon>
        <taxon>Cercopithecidae</taxon>
        <taxon>Cercopithecinae</taxon>
        <taxon>Macaca</taxon>
    </lineage>
</organism>
<name>HIS1_MACFA</name>
<dbReference type="PIR" id="A60736">
    <property type="entry name" value="A60736"/>
</dbReference>
<dbReference type="iPTMnet" id="P34084"/>
<dbReference type="Proteomes" id="UP000233100">
    <property type="component" value="Unplaced"/>
</dbReference>
<dbReference type="GO" id="GO:0005783">
    <property type="term" value="C:endoplasmic reticulum"/>
    <property type="evidence" value="ECO:0000250"/>
    <property type="project" value="UniProtKB"/>
</dbReference>
<dbReference type="GO" id="GO:0005576">
    <property type="term" value="C:extracellular region"/>
    <property type="evidence" value="ECO:0007669"/>
    <property type="project" value="UniProtKB-SubCell"/>
</dbReference>
<dbReference type="GO" id="GO:0005739">
    <property type="term" value="C:mitochondrion"/>
    <property type="evidence" value="ECO:0000250"/>
    <property type="project" value="UniProtKB"/>
</dbReference>
<dbReference type="GO" id="GO:0031214">
    <property type="term" value="P:biomineral tissue development"/>
    <property type="evidence" value="ECO:0007669"/>
    <property type="project" value="UniProtKB-KW"/>
</dbReference>
<dbReference type="GO" id="GO:0042742">
    <property type="term" value="P:defense response to bacterium"/>
    <property type="evidence" value="ECO:0007669"/>
    <property type="project" value="UniProtKB-KW"/>
</dbReference>
<dbReference type="GO" id="GO:0050832">
    <property type="term" value="P:defense response to fungus"/>
    <property type="evidence" value="ECO:0007669"/>
    <property type="project" value="UniProtKB-KW"/>
</dbReference>
<dbReference type="GO" id="GO:0031640">
    <property type="term" value="P:killing of cells of another organism"/>
    <property type="evidence" value="ECO:0007669"/>
    <property type="project" value="UniProtKB-KW"/>
</dbReference>
<dbReference type="GO" id="GO:0022409">
    <property type="term" value="P:positive regulation of cell-cell adhesion"/>
    <property type="evidence" value="ECO:0000250"/>
    <property type="project" value="UniProtKB"/>
</dbReference>
<dbReference type="GO" id="GO:0009893">
    <property type="term" value="P:positive regulation of metabolic process"/>
    <property type="evidence" value="ECO:0000250"/>
    <property type="project" value="UniProtKB"/>
</dbReference>
<dbReference type="GO" id="GO:1900026">
    <property type="term" value="P:positive regulation of substrate adhesion-dependent cell spreading"/>
    <property type="evidence" value="ECO:0000250"/>
    <property type="project" value="UniProtKB"/>
</dbReference>
<dbReference type="GO" id="GO:0035470">
    <property type="term" value="P:positive regulation of vascular wound healing"/>
    <property type="evidence" value="ECO:0000250"/>
    <property type="project" value="UniProtKB"/>
</dbReference>
<dbReference type="GO" id="GO:0090303">
    <property type="term" value="P:positive regulation of wound healing"/>
    <property type="evidence" value="ECO:0000250"/>
    <property type="project" value="UniProtKB"/>
</dbReference>
<dbReference type="GO" id="GO:1903691">
    <property type="term" value="P:positive regulation of wound healing, spreading of epidermal cells"/>
    <property type="evidence" value="ECO:0000250"/>
    <property type="project" value="UniProtKB"/>
</dbReference>
<reference key="1">
    <citation type="journal article" date="1990" name="J. Dent. Res.">
        <title>Primary structure and anticandidal activity of the major histatin from parotid secretion of the subhuman primate, Macaca fascicularis.</title>
        <authorList>
            <person name="Xu T."/>
            <person name="Telser E."/>
            <person name="Troxler R.F."/>
            <person name="Oppenheim F.G."/>
        </authorList>
    </citation>
    <scope>PROTEIN SEQUENCE</scope>
    <scope>PHOSPHORYLATION AT SER-2</scope>
    <source>
        <tissue>Parotid gland</tissue>
    </source>
</reference>
<accession>P34084</accession>
<keyword id="KW-0044">Antibiotic</keyword>
<keyword id="KW-0929">Antimicrobial</keyword>
<keyword id="KW-0091">Biomineralization</keyword>
<keyword id="KW-0903">Direct protein sequencing</keyword>
<keyword id="KW-0295">Fungicide</keyword>
<keyword id="KW-0597">Phosphoprotein</keyword>
<keyword id="KW-1185">Reference proteome</keyword>
<keyword id="KW-0964">Secreted</keyword>
<feature type="peptide" id="PRO_0000044777" description="Histatin-1">
    <location>
        <begin position="1"/>
        <end position="38"/>
    </location>
</feature>
<feature type="region of interest" description="Disordered" evidence="2">
    <location>
        <begin position="1"/>
        <end position="38"/>
    </location>
</feature>
<feature type="compositionally biased region" description="Basic residues" evidence="2">
    <location>
        <begin position="8"/>
        <end position="30"/>
    </location>
</feature>
<feature type="modified residue" description="Phosphoserine" evidence="3">
    <location>
        <position position="2"/>
    </location>
</feature>
<comment type="function">
    <text evidence="1">Histatins (Hsts) are cationic and histidine-rich secreted peptides mainly synthesized by saliva glands of humans and higher primates (By similarity). Hsts are considered to be major precursors of the protective proteinaceous structure on tooth surfaces (enamel pellicle).</text>
</comment>
<comment type="subcellular location">
    <subcellularLocation>
        <location>Secreted</location>
    </subcellularLocation>
</comment>
<comment type="similarity">
    <text evidence="4">Belongs to the histatin/statherin family.</text>
</comment>